<accession>Q5ZLP2</accession>
<organism>
    <name type="scientific">Gallus gallus</name>
    <name type="common">Chicken</name>
    <dbReference type="NCBI Taxonomy" id="9031"/>
    <lineage>
        <taxon>Eukaryota</taxon>
        <taxon>Metazoa</taxon>
        <taxon>Chordata</taxon>
        <taxon>Craniata</taxon>
        <taxon>Vertebrata</taxon>
        <taxon>Euteleostomi</taxon>
        <taxon>Archelosauria</taxon>
        <taxon>Archosauria</taxon>
        <taxon>Dinosauria</taxon>
        <taxon>Saurischia</taxon>
        <taxon>Theropoda</taxon>
        <taxon>Coelurosauria</taxon>
        <taxon>Aves</taxon>
        <taxon>Neognathae</taxon>
        <taxon>Galloanserae</taxon>
        <taxon>Galliformes</taxon>
        <taxon>Phasianidae</taxon>
        <taxon>Phasianinae</taxon>
        <taxon>Gallus</taxon>
    </lineage>
</organism>
<protein>
    <recommendedName>
        <fullName evidence="1">Methylthioribulose-1-phosphate dehydratase</fullName>
        <shortName evidence="1">MTRu-1-P dehydratase</shortName>
        <ecNumber evidence="1">4.2.1.109</ecNumber>
    </recommendedName>
    <alternativeName>
        <fullName evidence="1">APAF1-interacting protein homolog</fullName>
    </alternativeName>
</protein>
<reference key="1">
    <citation type="journal article" date="2005" name="Genome Biol.">
        <title>Full-length cDNAs from chicken bursal lymphocytes to facilitate gene function analysis.</title>
        <authorList>
            <person name="Caldwell R.B."/>
            <person name="Kierzek A.M."/>
            <person name="Arakawa H."/>
            <person name="Bezzubov Y."/>
            <person name="Zaim J."/>
            <person name="Fiedler P."/>
            <person name="Kutter S."/>
            <person name="Blagodatski A."/>
            <person name="Kostovska D."/>
            <person name="Koter M."/>
            <person name="Plachy J."/>
            <person name="Carninci P."/>
            <person name="Hayashizaki Y."/>
            <person name="Buerstedde J.-M."/>
        </authorList>
    </citation>
    <scope>NUCLEOTIDE SEQUENCE [LARGE SCALE MRNA]</scope>
    <source>
        <strain>CB</strain>
        <tissue>Bursa of Fabricius</tissue>
    </source>
</reference>
<sequence>MAAASGHGLELANGGDATQDKLHPRNLIPELCRLFYGLGWVTGTGGGISLKHGNEIYIAPSGVQKERIQPEDMFVCDMNEQDISGPPAHKKLKKSQCTPLFMNAYTMRGAGAVIHTHSKAAVMATLLYPGNEFTITHQEMIKGIQKCSSGGYYRYDDTLVVPIIENTPEEKDLKERMAKAMEEYPDSCAVLVRRHGVYVWGETWEKAKTMCECYDYLFDIAVQMKQHGLDPSKHPAGENGIL</sequence>
<feature type="chain" id="PRO_0000239024" description="Methylthioribulose-1-phosphate dehydratase">
    <location>
        <begin position="1"/>
        <end position="242"/>
    </location>
</feature>
<feature type="region of interest" description="Disordered" evidence="2">
    <location>
        <begin position="1"/>
        <end position="22"/>
    </location>
</feature>
<feature type="active site" description="Proton donor/acceptor" evidence="1">
    <location>
        <position position="139"/>
    </location>
</feature>
<feature type="binding site" evidence="1">
    <location>
        <position position="97"/>
    </location>
    <ligand>
        <name>substrate</name>
    </ligand>
</feature>
<feature type="binding site" evidence="1">
    <location>
        <position position="115"/>
    </location>
    <ligand>
        <name>Zn(2+)</name>
        <dbReference type="ChEBI" id="CHEBI:29105"/>
    </ligand>
</feature>
<feature type="binding site" evidence="1">
    <location>
        <position position="117"/>
    </location>
    <ligand>
        <name>Zn(2+)</name>
        <dbReference type="ChEBI" id="CHEBI:29105"/>
    </ligand>
</feature>
<feature type="binding site" evidence="1">
    <location>
        <position position="195"/>
    </location>
    <ligand>
        <name>Zn(2+)</name>
        <dbReference type="ChEBI" id="CHEBI:29105"/>
    </ligand>
</feature>
<comment type="function">
    <text evidence="1">Catalyzes the dehydration of methylthioribulose-1-phosphate (MTRu-1-P) into 2,3-diketo-5-methylthiopentyl-1-phosphate (DK-MTP-1-P). Functions in the methionine salvage pathway. May play a role in apoptosis.</text>
</comment>
<comment type="catalytic activity">
    <reaction evidence="1">
        <text>5-(methylsulfanyl)-D-ribulose 1-phosphate = 5-methylsulfanyl-2,3-dioxopentyl phosphate + H2O</text>
        <dbReference type="Rhea" id="RHEA:15549"/>
        <dbReference type="ChEBI" id="CHEBI:15377"/>
        <dbReference type="ChEBI" id="CHEBI:58548"/>
        <dbReference type="ChEBI" id="CHEBI:58828"/>
        <dbReference type="EC" id="4.2.1.109"/>
    </reaction>
</comment>
<comment type="cofactor">
    <cofactor evidence="1">
        <name>Zn(2+)</name>
        <dbReference type="ChEBI" id="CHEBI:29105"/>
    </cofactor>
    <text evidence="1">Binds 1 zinc ion per subunit.</text>
</comment>
<comment type="pathway">
    <text evidence="1">Amino-acid biosynthesis; L-methionine biosynthesis via salvage pathway; L-methionine from S-methyl-5-thio-alpha-D-ribose 1-phosphate: step 2/6.</text>
</comment>
<comment type="subcellular location">
    <subcellularLocation>
        <location evidence="1">Cytoplasm</location>
    </subcellularLocation>
</comment>
<comment type="similarity">
    <text evidence="1">Belongs to the aldolase class II family. MtnB subfamily.</text>
</comment>
<keyword id="KW-0028">Amino-acid biosynthesis</keyword>
<keyword id="KW-0053">Apoptosis</keyword>
<keyword id="KW-0963">Cytoplasm</keyword>
<keyword id="KW-0456">Lyase</keyword>
<keyword id="KW-0479">Metal-binding</keyword>
<keyword id="KW-0486">Methionine biosynthesis</keyword>
<keyword id="KW-1185">Reference proteome</keyword>
<keyword id="KW-0862">Zinc</keyword>
<gene>
    <name evidence="1" type="primary">APIP</name>
    <name type="ORF">RCJMB04_5f12</name>
</gene>
<dbReference type="EC" id="4.2.1.109" evidence="1"/>
<dbReference type="EMBL" id="AJ719692">
    <property type="protein sequence ID" value="CAG31351.1"/>
    <property type="molecule type" value="mRNA"/>
</dbReference>
<dbReference type="RefSeq" id="NP_001026718.1">
    <property type="nucleotide sequence ID" value="NM_001031547.2"/>
</dbReference>
<dbReference type="RefSeq" id="XP_025006596.2">
    <property type="nucleotide sequence ID" value="XM_025150828.3"/>
</dbReference>
<dbReference type="SMR" id="Q5ZLP2"/>
<dbReference type="FunCoup" id="Q5ZLP2">
    <property type="interactions" value="1675"/>
</dbReference>
<dbReference type="STRING" id="9031.ENSGALP00000054200"/>
<dbReference type="PaxDb" id="9031-ENSGALP00000012691"/>
<dbReference type="Ensembl" id="ENSGALT00010060929.1">
    <property type="protein sequence ID" value="ENSGALP00010037686.1"/>
    <property type="gene ID" value="ENSGALG00010024945.1"/>
</dbReference>
<dbReference type="GeneID" id="428860"/>
<dbReference type="KEGG" id="gga:428860"/>
<dbReference type="CTD" id="51074"/>
<dbReference type="VEuPathDB" id="HostDB:geneid_428860"/>
<dbReference type="eggNOG" id="KOG2631">
    <property type="taxonomic scope" value="Eukaryota"/>
</dbReference>
<dbReference type="GeneTree" id="ENSGT00390000001680"/>
<dbReference type="InParanoid" id="Q5ZLP2"/>
<dbReference type="OMA" id="WFPGTSG"/>
<dbReference type="OrthoDB" id="537444at2759"/>
<dbReference type="PhylomeDB" id="Q5ZLP2"/>
<dbReference type="UniPathway" id="UPA00904">
    <property type="reaction ID" value="UER00875"/>
</dbReference>
<dbReference type="PRO" id="PR:Q5ZLP2"/>
<dbReference type="Proteomes" id="UP000000539">
    <property type="component" value="Chromosome 5"/>
</dbReference>
<dbReference type="GO" id="GO:0005737">
    <property type="term" value="C:cytoplasm"/>
    <property type="evidence" value="ECO:0000318"/>
    <property type="project" value="GO_Central"/>
</dbReference>
<dbReference type="GO" id="GO:0042802">
    <property type="term" value="F:identical protein binding"/>
    <property type="evidence" value="ECO:0007669"/>
    <property type="project" value="Ensembl"/>
</dbReference>
<dbReference type="GO" id="GO:0046570">
    <property type="term" value="F:methylthioribulose 1-phosphate dehydratase activity"/>
    <property type="evidence" value="ECO:0000250"/>
    <property type="project" value="UniProtKB"/>
</dbReference>
<dbReference type="GO" id="GO:0008270">
    <property type="term" value="F:zinc ion binding"/>
    <property type="evidence" value="ECO:0000250"/>
    <property type="project" value="UniProtKB"/>
</dbReference>
<dbReference type="GO" id="GO:0006915">
    <property type="term" value="P:apoptotic process"/>
    <property type="evidence" value="ECO:0007669"/>
    <property type="project" value="UniProtKB-KW"/>
</dbReference>
<dbReference type="GO" id="GO:0019509">
    <property type="term" value="P:L-methionine salvage from methylthioadenosine"/>
    <property type="evidence" value="ECO:0000250"/>
    <property type="project" value="UniProtKB"/>
</dbReference>
<dbReference type="GO" id="GO:0043066">
    <property type="term" value="P:negative regulation of apoptotic process"/>
    <property type="evidence" value="ECO:0007669"/>
    <property type="project" value="Ensembl"/>
</dbReference>
<dbReference type="GO" id="GO:0051289">
    <property type="term" value="P:protein homotetramerization"/>
    <property type="evidence" value="ECO:0007669"/>
    <property type="project" value="Ensembl"/>
</dbReference>
<dbReference type="GO" id="GO:0070269">
    <property type="term" value="P:pyroptotic inflammatory response"/>
    <property type="evidence" value="ECO:0007669"/>
    <property type="project" value="Ensembl"/>
</dbReference>
<dbReference type="GO" id="GO:0070372">
    <property type="term" value="P:regulation of ERK1 and ERK2 cascade"/>
    <property type="evidence" value="ECO:0007669"/>
    <property type="project" value="Ensembl"/>
</dbReference>
<dbReference type="FunFam" id="3.40.225.10:FF:000003">
    <property type="entry name" value="Methylthioribulose-1-phosphate dehydratase"/>
    <property type="match status" value="1"/>
</dbReference>
<dbReference type="Gene3D" id="3.40.225.10">
    <property type="entry name" value="Class II aldolase/adducin N-terminal domain"/>
    <property type="match status" value="1"/>
</dbReference>
<dbReference type="HAMAP" id="MF_03116">
    <property type="entry name" value="Salvage_MtnB_euk"/>
    <property type="match status" value="1"/>
</dbReference>
<dbReference type="InterPro" id="IPR001303">
    <property type="entry name" value="Aldolase_II/adducin_N"/>
</dbReference>
<dbReference type="InterPro" id="IPR036409">
    <property type="entry name" value="Aldolase_II/adducin_N_sf"/>
</dbReference>
<dbReference type="InterPro" id="IPR017714">
    <property type="entry name" value="MethylthioRu-1-P_deHdtase_MtnB"/>
</dbReference>
<dbReference type="InterPro" id="IPR027514">
    <property type="entry name" value="Salvage_MtnB_euk"/>
</dbReference>
<dbReference type="NCBIfam" id="TIGR03328">
    <property type="entry name" value="salvage_mtnB"/>
    <property type="match status" value="1"/>
</dbReference>
<dbReference type="PANTHER" id="PTHR10640">
    <property type="entry name" value="METHYLTHIORIBULOSE-1-PHOSPHATE DEHYDRATASE"/>
    <property type="match status" value="1"/>
</dbReference>
<dbReference type="PANTHER" id="PTHR10640:SF7">
    <property type="entry name" value="METHYLTHIORIBULOSE-1-PHOSPHATE DEHYDRATASE"/>
    <property type="match status" value="1"/>
</dbReference>
<dbReference type="Pfam" id="PF00596">
    <property type="entry name" value="Aldolase_II"/>
    <property type="match status" value="1"/>
</dbReference>
<dbReference type="SMART" id="SM01007">
    <property type="entry name" value="Aldolase_II"/>
    <property type="match status" value="1"/>
</dbReference>
<dbReference type="SUPFAM" id="SSF53639">
    <property type="entry name" value="AraD/HMP-PK domain-like"/>
    <property type="match status" value="1"/>
</dbReference>
<name>MTNB_CHICK</name>
<evidence type="ECO:0000255" key="1">
    <source>
        <dbReference type="HAMAP-Rule" id="MF_03116"/>
    </source>
</evidence>
<evidence type="ECO:0000256" key="2">
    <source>
        <dbReference type="SAM" id="MobiDB-lite"/>
    </source>
</evidence>
<proteinExistence type="evidence at transcript level"/>